<name>MMPLB_MYCTO</name>
<protein>
    <recommendedName>
        <fullName evidence="1">Heme uptake protein MmpL11</fullName>
    </recommendedName>
</protein>
<evidence type="ECO:0000250" key="1">
    <source>
        <dbReference type="UniProtKB" id="P9WJT9"/>
    </source>
</evidence>
<evidence type="ECO:0000255" key="2"/>
<evidence type="ECO:0000305" key="3"/>
<accession>P9WJT8</accession>
<accession>L0T2Z6</accession>
<accession>O53653</accession>
<accession>P65374</accession>
<keyword id="KW-0997">Cell inner membrane</keyword>
<keyword id="KW-1003">Cell membrane</keyword>
<keyword id="KW-0472">Membrane</keyword>
<keyword id="KW-1185">Reference proteome</keyword>
<keyword id="KW-0812">Transmembrane</keyword>
<keyword id="KW-1133">Transmembrane helix</keyword>
<keyword id="KW-0813">Transport</keyword>
<feature type="chain" id="PRO_0000427772" description="Heme uptake protein MmpL11">
    <location>
        <begin position="1"/>
        <end position="966"/>
    </location>
</feature>
<feature type="transmembrane region" description="Helical" evidence="2">
    <location>
        <begin position="13"/>
        <end position="33"/>
    </location>
</feature>
<feature type="transmembrane region" description="Helical" evidence="2">
    <location>
        <begin position="188"/>
        <end position="208"/>
    </location>
</feature>
<feature type="transmembrane region" description="Helical" evidence="2">
    <location>
        <begin position="214"/>
        <end position="234"/>
    </location>
</feature>
<feature type="transmembrane region" description="Helical" evidence="2">
    <location>
        <begin position="235"/>
        <end position="255"/>
    </location>
</feature>
<feature type="transmembrane region" description="Helical" evidence="2">
    <location>
        <begin position="279"/>
        <end position="299"/>
    </location>
</feature>
<feature type="transmembrane region" description="Helical" evidence="2">
    <location>
        <begin position="311"/>
        <end position="331"/>
    </location>
</feature>
<feature type="transmembrane region" description="Helical" evidence="2">
    <location>
        <begin position="373"/>
        <end position="393"/>
    </location>
</feature>
<feature type="transmembrane region" description="Helical" evidence="2">
    <location>
        <begin position="527"/>
        <end position="547"/>
    </location>
</feature>
<feature type="transmembrane region" description="Helical" evidence="2">
    <location>
        <begin position="557"/>
        <end position="577"/>
    </location>
</feature>
<feature type="transmembrane region" description="Helical" evidence="2">
    <location>
        <begin position="595"/>
        <end position="615"/>
    </location>
</feature>
<feature type="transmembrane region" description="Helical" evidence="2">
    <location>
        <begin position="646"/>
        <end position="666"/>
    </location>
</feature>
<feature type="transmembrane region" description="Helical" evidence="2">
    <location>
        <begin position="668"/>
        <end position="688"/>
    </location>
</feature>
<sequence length="966" mass="103502">MMRLSRNLRRCRWLVFTGWLLALVPAVYLAMTQSGNLTGGGFEVAGSQSLLVHDQLDAHYPDRGAPALALVAAPRPDASYQDIDNAVALLRQIASELPGVTEAPNPTQRPPQPDRPYVVSLRLDARNAGTSDVAKKLRDRIGVKGDQSGQTANGKVRLYVIGQGALSAAAAANTKHDIANAERWNLPIILMVLVAVFGSLAAAAIPLALAVCTVVITMGLVFVLSMHTTMSVFVTSTVSMFGIALAVDYSLFILMRYREELRCGRRPPDAVDAAMATSGLAVVLSGMTVIASLTGIYLINTPALRSMATGAILAVAVAMLTSATLTPAVLATFARAAAKRSALVHWSRRPASTQSWFWSRWVGWVMRRPWITALAASTVLLVMAAPATLMVLGNSLLRQFDSSHEIRTGAAAAAQALGPGALGPVQVLVRFDAGGASAPEHSQTIAAIRHRIAQAPNVVSVAPPRFADDNGSALLSAVLSVDPEDLGARDTITWMRTQLPRVAGAAQVDVGGPTALIKDFDDRVSATQPLVLVFVAVIAFLMLLISIRSVFLAFKGVLMTLLSVAAAYGSLVMVFQWGWARGLGFPALHSIDSTVPPLVLAMTFGLSMDYEIFLLTRIRERFLQTGQTRDAVAYGVRTSARTITSAALIMIAVFCGFAFAGMPLVAEIGVACAVAIAVDATVVRLVLVPALMAMFDRWNWWLPRWLAHILPSVDFDRPLPKVDLGDVVVIPDDFAAAIPPSADVRMVLKSAAKLKRLAPDAICVTDPLAFTGCGCDGKALDQVQLAYRNGIARAISWGQRPVHPVTVWRKRLAVALDALQTTTWECGGVQTHRAGPGYRRRSPVETTNVALPTGDRLQIPTGAETLRFKGYLIMSRNSSHDYADFADLVDTMAPETAAAVLAGMDRYYSCQAPGRQWMATQLVGRLADPQPSDLGDQSPGADAQAKWEEVRRRCLSVAVAMLEEAR</sequence>
<proteinExistence type="inferred from homology"/>
<organism>
    <name type="scientific">Mycobacterium tuberculosis (strain CDC 1551 / Oshkosh)</name>
    <dbReference type="NCBI Taxonomy" id="83331"/>
    <lineage>
        <taxon>Bacteria</taxon>
        <taxon>Bacillati</taxon>
        <taxon>Actinomycetota</taxon>
        <taxon>Actinomycetes</taxon>
        <taxon>Mycobacteriales</taxon>
        <taxon>Mycobacteriaceae</taxon>
        <taxon>Mycobacterium</taxon>
        <taxon>Mycobacterium tuberculosis complex</taxon>
    </lineage>
</organism>
<gene>
    <name type="primary">mmpL11</name>
    <name type="ordered locus">MT0212</name>
</gene>
<dbReference type="EMBL" id="AE000516">
    <property type="protein sequence ID" value="AAK44433.1"/>
    <property type="molecule type" value="Genomic_DNA"/>
</dbReference>
<dbReference type="PIR" id="G70838">
    <property type="entry name" value="G70838"/>
</dbReference>
<dbReference type="RefSeq" id="WP_003401190.1">
    <property type="nucleotide sequence ID" value="NZ_KK341227.1"/>
</dbReference>
<dbReference type="SMR" id="P9WJT8"/>
<dbReference type="KEGG" id="mtc:MT0212"/>
<dbReference type="PATRIC" id="fig|83331.31.peg.231"/>
<dbReference type="HOGENOM" id="CLU_005108_2_0_11"/>
<dbReference type="Proteomes" id="UP000001020">
    <property type="component" value="Chromosome"/>
</dbReference>
<dbReference type="GO" id="GO:0005886">
    <property type="term" value="C:plasma membrane"/>
    <property type="evidence" value="ECO:0007669"/>
    <property type="project" value="UniProtKB-SubCell"/>
</dbReference>
<dbReference type="FunFam" id="1.20.1640.10:FF:000049">
    <property type="entry name" value="Transmembrane transport protein MmpL11"/>
    <property type="match status" value="1"/>
</dbReference>
<dbReference type="Gene3D" id="1.20.1640.10">
    <property type="entry name" value="Multidrug efflux transporter AcrB transmembrane domain"/>
    <property type="match status" value="2"/>
</dbReference>
<dbReference type="InterPro" id="IPR004869">
    <property type="entry name" value="MMPL_dom"/>
</dbReference>
<dbReference type="InterPro" id="IPR050545">
    <property type="entry name" value="Mycobact_MmpL"/>
</dbReference>
<dbReference type="InterPro" id="IPR000731">
    <property type="entry name" value="SSD"/>
</dbReference>
<dbReference type="PANTHER" id="PTHR33406">
    <property type="entry name" value="MEMBRANE PROTEIN MJ1562-RELATED"/>
    <property type="match status" value="1"/>
</dbReference>
<dbReference type="PANTHER" id="PTHR33406:SF13">
    <property type="entry name" value="MEMBRANE PROTEIN YDFJ"/>
    <property type="match status" value="1"/>
</dbReference>
<dbReference type="Pfam" id="PF03176">
    <property type="entry name" value="MMPL"/>
    <property type="match status" value="2"/>
</dbReference>
<dbReference type="SUPFAM" id="SSF82866">
    <property type="entry name" value="Multidrug efflux transporter AcrB transmembrane domain"/>
    <property type="match status" value="2"/>
</dbReference>
<dbReference type="PROSITE" id="PS50156">
    <property type="entry name" value="SSD"/>
    <property type="match status" value="1"/>
</dbReference>
<reference key="1">
    <citation type="journal article" date="2002" name="J. Bacteriol.">
        <title>Whole-genome comparison of Mycobacterium tuberculosis clinical and laboratory strains.</title>
        <authorList>
            <person name="Fleischmann R.D."/>
            <person name="Alland D."/>
            <person name="Eisen J.A."/>
            <person name="Carpenter L."/>
            <person name="White O."/>
            <person name="Peterson J.D."/>
            <person name="DeBoy R.T."/>
            <person name="Dodson R.J."/>
            <person name="Gwinn M.L."/>
            <person name="Haft D.H."/>
            <person name="Hickey E.K."/>
            <person name="Kolonay J.F."/>
            <person name="Nelson W.C."/>
            <person name="Umayam L.A."/>
            <person name="Ermolaeva M.D."/>
            <person name="Salzberg S.L."/>
            <person name="Delcher A."/>
            <person name="Utterback T.R."/>
            <person name="Weidman J.F."/>
            <person name="Khouri H.M."/>
            <person name="Gill J."/>
            <person name="Mikula A."/>
            <person name="Bishai W."/>
            <person name="Jacobs W.R. Jr."/>
            <person name="Venter J.C."/>
            <person name="Fraser C.M."/>
        </authorList>
    </citation>
    <scope>NUCLEOTIDE SEQUENCE [LARGE SCALE GENOMIC DNA]</scope>
    <source>
        <strain>CDC 1551 / Oshkosh</strain>
    </source>
</reference>
<comment type="function">
    <text evidence="1">Part of a heme-iron acquisition system. Receives heme from the heme-binding protein MT0213 and transports it into the mycobacterial cell.</text>
</comment>
<comment type="function">
    <text evidence="1">Could also transport the mycolic acid-containing lipids monomeromycolyl diacylglycerol (MMDAG) and mycolate ester wax (WE) to the bacterial surface.</text>
</comment>
<comment type="subcellular location">
    <subcellularLocation>
        <location evidence="1">Cell inner membrane</location>
        <topology evidence="2">Multi-pass membrane protein</topology>
    </subcellularLocation>
</comment>
<comment type="similarity">
    <text evidence="3">Belongs to the resistance-nodulation-cell division (RND) (TC 2.A.6) family. MmpL subfamily.</text>
</comment>